<feature type="chain" id="PRO_0000297584" description="Dynein axonemal assembly factor 3 homolog">
    <location>
        <begin position="1"/>
        <end position="540"/>
    </location>
</feature>
<feature type="region of interest" description="Disordered" evidence="2">
    <location>
        <begin position="480"/>
        <end position="499"/>
    </location>
</feature>
<feature type="sequence conflict" description="In Ref. 3; AAV37030." evidence="5" ref="3">
    <original>H</original>
    <variation>Y</variation>
    <location>
        <position position="316"/>
    </location>
</feature>
<proteinExistence type="evidence at protein level"/>
<organism>
    <name type="scientific">Drosophila melanogaster</name>
    <name type="common">Fruit fly</name>
    <dbReference type="NCBI Taxonomy" id="7227"/>
    <lineage>
        <taxon>Eukaryota</taxon>
        <taxon>Metazoa</taxon>
        <taxon>Ecdysozoa</taxon>
        <taxon>Arthropoda</taxon>
        <taxon>Hexapoda</taxon>
        <taxon>Insecta</taxon>
        <taxon>Pterygota</taxon>
        <taxon>Neoptera</taxon>
        <taxon>Endopterygota</taxon>
        <taxon>Diptera</taxon>
        <taxon>Brachycera</taxon>
        <taxon>Muscomorpha</taxon>
        <taxon>Ephydroidea</taxon>
        <taxon>Drosophilidae</taxon>
        <taxon>Drosophila</taxon>
        <taxon>Sophophora</taxon>
    </lineage>
</organism>
<dbReference type="EMBL" id="AE013599">
    <property type="protein sequence ID" value="AAF57682.1"/>
    <property type="molecule type" value="Genomic_DNA"/>
</dbReference>
<dbReference type="EMBL" id="BT016145">
    <property type="protein sequence ID" value="AAV37030.1"/>
    <property type="molecule type" value="mRNA"/>
</dbReference>
<dbReference type="EMBL" id="BT050480">
    <property type="protein sequence ID" value="ACJ13187.1"/>
    <property type="molecule type" value="mRNA"/>
</dbReference>
<dbReference type="RefSeq" id="NP_611336.1">
    <property type="nucleotide sequence ID" value="NM_137492.2"/>
</dbReference>
<dbReference type="SMR" id="A1ZB91"/>
<dbReference type="FunCoup" id="A1ZB91">
    <property type="interactions" value="2"/>
</dbReference>
<dbReference type="STRING" id="7227.FBpp0085901"/>
<dbReference type="PaxDb" id="7227-FBpp0085901"/>
<dbReference type="DNASU" id="37125"/>
<dbReference type="EnsemblMetazoa" id="FBtr0086722">
    <property type="protein sequence ID" value="FBpp0085901"/>
    <property type="gene ID" value="FBgn0034352"/>
</dbReference>
<dbReference type="GeneID" id="37125"/>
<dbReference type="KEGG" id="dme:Dmel_CG17669"/>
<dbReference type="UCSC" id="CG17669-RA">
    <property type="organism name" value="d. melanogaster"/>
</dbReference>
<dbReference type="AGR" id="FB:FBgn0034352"/>
<dbReference type="CTD" id="352909"/>
<dbReference type="FlyBase" id="FBgn0034352">
    <property type="gene designation" value="Dnaaf3"/>
</dbReference>
<dbReference type="VEuPathDB" id="VectorBase:FBgn0034352"/>
<dbReference type="eggNOG" id="ENOG502QT97">
    <property type="taxonomic scope" value="Eukaryota"/>
</dbReference>
<dbReference type="GeneTree" id="ENSGT00390000002069"/>
<dbReference type="HOGENOM" id="CLU_024420_2_1_1"/>
<dbReference type="InParanoid" id="A1ZB91"/>
<dbReference type="OMA" id="EYEQCKP"/>
<dbReference type="OrthoDB" id="538817at2759"/>
<dbReference type="PhylomeDB" id="A1ZB91"/>
<dbReference type="BioGRID-ORCS" id="37125">
    <property type="hits" value="0 hits in 1 CRISPR screen"/>
</dbReference>
<dbReference type="GenomeRNAi" id="37125"/>
<dbReference type="PRO" id="PR:A1ZB91"/>
<dbReference type="Proteomes" id="UP000000803">
    <property type="component" value="Chromosome 2R"/>
</dbReference>
<dbReference type="Bgee" id="FBgn0034352">
    <property type="expression patterns" value="Expressed in early-mid elongation-stage spermatid (Drosophila) in testis and 31 other cell types or tissues"/>
</dbReference>
<dbReference type="GO" id="GO:0005829">
    <property type="term" value="C:cytosol"/>
    <property type="evidence" value="ECO:0000314"/>
    <property type="project" value="FlyBase"/>
</dbReference>
<dbReference type="GO" id="GO:0120293">
    <property type="term" value="C:dynein axonemal particle"/>
    <property type="evidence" value="ECO:0000250"/>
    <property type="project" value="UniProtKB"/>
</dbReference>
<dbReference type="GO" id="GO:0070286">
    <property type="term" value="P:axonemal dynein complex assembly"/>
    <property type="evidence" value="ECO:0000315"/>
    <property type="project" value="FlyBase"/>
</dbReference>
<dbReference type="GO" id="GO:0044458">
    <property type="term" value="P:motile cilium assembly"/>
    <property type="evidence" value="ECO:0000318"/>
    <property type="project" value="GO_Central"/>
</dbReference>
<dbReference type="GO" id="GO:1905515">
    <property type="term" value="P:non-motile cilium assembly"/>
    <property type="evidence" value="ECO:0000315"/>
    <property type="project" value="FlyBase"/>
</dbReference>
<dbReference type="GO" id="GO:0120316">
    <property type="term" value="P:sperm flagellum assembly"/>
    <property type="evidence" value="ECO:0000315"/>
    <property type="project" value="FlyBase"/>
</dbReference>
<dbReference type="InterPro" id="IPR039304">
    <property type="entry name" value="DNAAF3"/>
</dbReference>
<dbReference type="InterPro" id="IPR028235">
    <property type="entry name" value="DNAAF3_C"/>
</dbReference>
<dbReference type="InterPro" id="IPR027974">
    <property type="entry name" value="DUF4470"/>
</dbReference>
<dbReference type="PANTHER" id="PTHR22118">
    <property type="entry name" value="DYNEIN ASSEMBLY FACTOR 3, AXONEMAL"/>
    <property type="match status" value="1"/>
</dbReference>
<dbReference type="PANTHER" id="PTHR22118:SF14">
    <property type="entry name" value="DYNEIN AXONEMAL ASSEMBLY FACTOR 3"/>
    <property type="match status" value="1"/>
</dbReference>
<dbReference type="Pfam" id="PF14737">
    <property type="entry name" value="DUF4470"/>
    <property type="match status" value="1"/>
</dbReference>
<dbReference type="Pfam" id="PF14740">
    <property type="entry name" value="DUF4471"/>
    <property type="match status" value="1"/>
</dbReference>
<protein>
    <recommendedName>
        <fullName evidence="4">Dynein axonemal assembly factor 3 homolog</fullName>
    </recommendedName>
</protein>
<gene>
    <name evidence="4 6" type="primary">Dnaaf3</name>
    <name evidence="6" type="ORF">CG17669</name>
</gene>
<comment type="function">
    <text evidence="3">Required for the assembly of axonemal inner and outer dynein arms (PubMed:34553759). Involved in the cytoplasmic preassembly of dyneins into complexes before their transport into cilia (PubMed:34553759). Essential for the development of axonemal dynein motors in the sensory cilium of mechanosensory chordotonal (Ch) neurons and sperm flagellum, and consequently, is required for the mechanotransduction process of hearing and sperm mobility (PubMed:34553759).</text>
</comment>
<comment type="subcellular location">
    <subcellularLocation>
        <location evidence="3">Cytoplasm</location>
    </subcellularLocation>
    <subcellularLocation>
        <location evidence="1">Dynein axonemal particle</location>
    </subcellularLocation>
    <text evidence="3">Detected in the cytoplasm of differentiating motile ciliated cells including the chordotonal (Ch) neurons, spermatocytes and spermatids.</text>
</comment>
<comment type="tissue specificity">
    <text evidence="3">Expressed in mechanosensory chordotonal (Ch) neurons, spermatocytes and spermatids (at protein level).</text>
</comment>
<comment type="developmental stage">
    <text evidence="3">In stage 16 embryo, restricted to all differentiating mechanosensory chordotonal (Ch) neurons (lch5, v'ch1, and vchAB) (at protein level) (PubMed:34553759). In pupae, expression is restricted to the neuronal cell bodies and dendrite inner segments of Ch neurons within the Johnston's organ (at protein level) (PubMed:34553759).</text>
</comment>
<comment type="disruption phenotype">
    <text evidence="3">Displays impaired motility of cilia/flagella (PubMed:34553759). Adult males are infertile due to immotile sperm with flagella that lack dynein arms and display axoneme disruption (PubMed:34553759). However, the testes appear normal in shape and contain elongating flagellar bundles of spermatids (PubMed:34553759). Larvae fail to react to tone stimulus due to defective auditory/vibration mechanotransduction (PubMed:34553759). RNAi-mediated knockdown in the sensory neurons of females results in uncoordinated locomotion during climbing (PubMed:34553759).</text>
</comment>
<comment type="similarity">
    <text evidence="5">Belongs to the DNAAF3 family.</text>
</comment>
<keyword id="KW-0970">Cilium biogenesis/degradation</keyword>
<keyword id="KW-0963">Cytoplasm</keyword>
<keyword id="KW-1185">Reference proteome</keyword>
<accession>A1ZB91</accession>
<accession>B6IDP0</accession>
<accession>Q5U0U7</accession>
<evidence type="ECO:0000250" key="1">
    <source>
        <dbReference type="UniProtKB" id="Q32NQ7"/>
    </source>
</evidence>
<evidence type="ECO:0000256" key="2">
    <source>
        <dbReference type="SAM" id="MobiDB-lite"/>
    </source>
</evidence>
<evidence type="ECO:0000269" key="3">
    <source>
    </source>
</evidence>
<evidence type="ECO:0000303" key="4">
    <source>
    </source>
</evidence>
<evidence type="ECO:0000305" key="5"/>
<evidence type="ECO:0000312" key="6">
    <source>
        <dbReference type="FlyBase" id="FBgn0034352"/>
    </source>
</evidence>
<name>DAAF3_DROME</name>
<sequence>MLWGISSALDLYEEYLRAFKIKDDPLPEDEHAREEAEEAAGDNTLNTLNILICGGADPRHVIKTLAKRYTHRIRPKLNIYLLDGCAEIEARNMLLLGVALEDPESFNLVSKVHLFMDLYGNAVIRPSSHHYMAAKGRTLLKMVTNEEELQRLAPMLNIEGLKYKERDGFEMAFTFWQPQPWNVFEVTAYWEQRSRALLGTRYDHRNGAFDWDLSMTLKERGGQQICSQEYRYWRETGVAFVFPEYEHCKPNKTLAVGLVRNGRNFIHRGYVGDIQTGPFCGFGLRTVEERMHHSVHGDNDYRATDITERNLMEFFHELLTQTAYEHDTTRSRRYGSVQLLMTPLLNHQEEDAAGQAAYDKPWIHVPGVTVHFVSPMEMEQLKKGAAHWNNMFDIVFMAYNYYSFLSKDFFQAMRAQSLFILETKLMTVERKDRVQEYESKAKELMKDAGLKAAINYQAINGKNMWLKYKKTDKDEQEDEAVTEAMPESTFKYDTDTDYGEPAEEYTGLVIEEIPSSNQTVAAIKKEVEAEGPLQPKTNFP</sequence>
<reference key="1">
    <citation type="journal article" date="2000" name="Science">
        <title>The genome sequence of Drosophila melanogaster.</title>
        <authorList>
            <person name="Adams M.D."/>
            <person name="Celniker S.E."/>
            <person name="Holt R.A."/>
            <person name="Evans C.A."/>
            <person name="Gocayne J.D."/>
            <person name="Amanatides P.G."/>
            <person name="Scherer S.E."/>
            <person name="Li P.W."/>
            <person name="Hoskins R.A."/>
            <person name="Galle R.F."/>
            <person name="George R.A."/>
            <person name="Lewis S.E."/>
            <person name="Richards S."/>
            <person name="Ashburner M."/>
            <person name="Henderson S.N."/>
            <person name="Sutton G.G."/>
            <person name="Wortman J.R."/>
            <person name="Yandell M.D."/>
            <person name="Zhang Q."/>
            <person name="Chen L.X."/>
            <person name="Brandon R.C."/>
            <person name="Rogers Y.-H.C."/>
            <person name="Blazej R.G."/>
            <person name="Champe M."/>
            <person name="Pfeiffer B.D."/>
            <person name="Wan K.H."/>
            <person name="Doyle C."/>
            <person name="Baxter E.G."/>
            <person name="Helt G."/>
            <person name="Nelson C.R."/>
            <person name="Miklos G.L.G."/>
            <person name="Abril J.F."/>
            <person name="Agbayani A."/>
            <person name="An H.-J."/>
            <person name="Andrews-Pfannkoch C."/>
            <person name="Baldwin D."/>
            <person name="Ballew R.M."/>
            <person name="Basu A."/>
            <person name="Baxendale J."/>
            <person name="Bayraktaroglu L."/>
            <person name="Beasley E.M."/>
            <person name="Beeson K.Y."/>
            <person name="Benos P.V."/>
            <person name="Berman B.P."/>
            <person name="Bhandari D."/>
            <person name="Bolshakov S."/>
            <person name="Borkova D."/>
            <person name="Botchan M.R."/>
            <person name="Bouck J."/>
            <person name="Brokstein P."/>
            <person name="Brottier P."/>
            <person name="Burtis K.C."/>
            <person name="Busam D.A."/>
            <person name="Butler H."/>
            <person name="Cadieu E."/>
            <person name="Center A."/>
            <person name="Chandra I."/>
            <person name="Cherry J.M."/>
            <person name="Cawley S."/>
            <person name="Dahlke C."/>
            <person name="Davenport L.B."/>
            <person name="Davies P."/>
            <person name="de Pablos B."/>
            <person name="Delcher A."/>
            <person name="Deng Z."/>
            <person name="Mays A.D."/>
            <person name="Dew I."/>
            <person name="Dietz S.M."/>
            <person name="Dodson K."/>
            <person name="Doup L.E."/>
            <person name="Downes M."/>
            <person name="Dugan-Rocha S."/>
            <person name="Dunkov B.C."/>
            <person name="Dunn P."/>
            <person name="Durbin K.J."/>
            <person name="Evangelista C.C."/>
            <person name="Ferraz C."/>
            <person name="Ferriera S."/>
            <person name="Fleischmann W."/>
            <person name="Fosler C."/>
            <person name="Gabrielian A.E."/>
            <person name="Garg N.S."/>
            <person name="Gelbart W.M."/>
            <person name="Glasser K."/>
            <person name="Glodek A."/>
            <person name="Gong F."/>
            <person name="Gorrell J.H."/>
            <person name="Gu Z."/>
            <person name="Guan P."/>
            <person name="Harris M."/>
            <person name="Harris N.L."/>
            <person name="Harvey D.A."/>
            <person name="Heiman T.J."/>
            <person name="Hernandez J.R."/>
            <person name="Houck J."/>
            <person name="Hostin D."/>
            <person name="Houston K.A."/>
            <person name="Howland T.J."/>
            <person name="Wei M.-H."/>
            <person name="Ibegwam C."/>
            <person name="Jalali M."/>
            <person name="Kalush F."/>
            <person name="Karpen G.H."/>
            <person name="Ke Z."/>
            <person name="Kennison J.A."/>
            <person name="Ketchum K.A."/>
            <person name="Kimmel B.E."/>
            <person name="Kodira C.D."/>
            <person name="Kraft C.L."/>
            <person name="Kravitz S."/>
            <person name="Kulp D."/>
            <person name="Lai Z."/>
            <person name="Lasko P."/>
            <person name="Lei Y."/>
            <person name="Levitsky A.A."/>
            <person name="Li J.H."/>
            <person name="Li Z."/>
            <person name="Liang Y."/>
            <person name="Lin X."/>
            <person name="Liu X."/>
            <person name="Mattei B."/>
            <person name="McIntosh T.C."/>
            <person name="McLeod M.P."/>
            <person name="McPherson D."/>
            <person name="Merkulov G."/>
            <person name="Milshina N.V."/>
            <person name="Mobarry C."/>
            <person name="Morris J."/>
            <person name="Moshrefi A."/>
            <person name="Mount S.M."/>
            <person name="Moy M."/>
            <person name="Murphy B."/>
            <person name="Murphy L."/>
            <person name="Muzny D.M."/>
            <person name="Nelson D.L."/>
            <person name="Nelson D.R."/>
            <person name="Nelson K.A."/>
            <person name="Nixon K."/>
            <person name="Nusskern D.R."/>
            <person name="Pacleb J.M."/>
            <person name="Palazzolo M."/>
            <person name="Pittman G.S."/>
            <person name="Pan S."/>
            <person name="Pollard J."/>
            <person name="Puri V."/>
            <person name="Reese M.G."/>
            <person name="Reinert K."/>
            <person name="Remington K."/>
            <person name="Saunders R.D.C."/>
            <person name="Scheeler F."/>
            <person name="Shen H."/>
            <person name="Shue B.C."/>
            <person name="Siden-Kiamos I."/>
            <person name="Simpson M."/>
            <person name="Skupski M.P."/>
            <person name="Smith T.J."/>
            <person name="Spier E."/>
            <person name="Spradling A.C."/>
            <person name="Stapleton M."/>
            <person name="Strong R."/>
            <person name="Sun E."/>
            <person name="Svirskas R."/>
            <person name="Tector C."/>
            <person name="Turner R."/>
            <person name="Venter E."/>
            <person name="Wang A.H."/>
            <person name="Wang X."/>
            <person name="Wang Z.-Y."/>
            <person name="Wassarman D.A."/>
            <person name="Weinstock G.M."/>
            <person name="Weissenbach J."/>
            <person name="Williams S.M."/>
            <person name="Woodage T."/>
            <person name="Worley K.C."/>
            <person name="Wu D."/>
            <person name="Yang S."/>
            <person name="Yao Q.A."/>
            <person name="Ye J."/>
            <person name="Yeh R.-F."/>
            <person name="Zaveri J.S."/>
            <person name="Zhan M."/>
            <person name="Zhang G."/>
            <person name="Zhao Q."/>
            <person name="Zheng L."/>
            <person name="Zheng X.H."/>
            <person name="Zhong F.N."/>
            <person name="Zhong W."/>
            <person name="Zhou X."/>
            <person name="Zhu S.C."/>
            <person name="Zhu X."/>
            <person name="Smith H.O."/>
            <person name="Gibbs R.A."/>
            <person name="Myers E.W."/>
            <person name="Rubin G.M."/>
            <person name="Venter J.C."/>
        </authorList>
    </citation>
    <scope>NUCLEOTIDE SEQUENCE [LARGE SCALE GENOMIC DNA]</scope>
    <source>
        <strain>Berkeley</strain>
    </source>
</reference>
<reference key="2">
    <citation type="journal article" date="2002" name="Genome Biol.">
        <title>Annotation of the Drosophila melanogaster euchromatic genome: a systematic review.</title>
        <authorList>
            <person name="Misra S."/>
            <person name="Crosby M.A."/>
            <person name="Mungall C.J."/>
            <person name="Matthews B.B."/>
            <person name="Campbell K.S."/>
            <person name="Hradecky P."/>
            <person name="Huang Y."/>
            <person name="Kaminker J.S."/>
            <person name="Millburn G.H."/>
            <person name="Prochnik S.E."/>
            <person name="Smith C.D."/>
            <person name="Tupy J.L."/>
            <person name="Whitfield E.J."/>
            <person name="Bayraktaroglu L."/>
            <person name="Berman B.P."/>
            <person name="Bettencourt B.R."/>
            <person name="Celniker S.E."/>
            <person name="de Grey A.D.N.J."/>
            <person name="Drysdale R.A."/>
            <person name="Harris N.L."/>
            <person name="Richter J."/>
            <person name="Russo S."/>
            <person name="Schroeder A.J."/>
            <person name="Shu S.Q."/>
            <person name="Stapleton M."/>
            <person name="Yamada C."/>
            <person name="Ashburner M."/>
            <person name="Gelbart W.M."/>
            <person name="Rubin G.M."/>
            <person name="Lewis S.E."/>
        </authorList>
    </citation>
    <scope>GENOME REANNOTATION</scope>
    <source>
        <strain>Berkeley</strain>
    </source>
</reference>
<reference key="3">
    <citation type="submission" date="2008-11" db="EMBL/GenBank/DDBJ databases">
        <authorList>
            <person name="Stapleton M."/>
            <person name="Carlson J.W."/>
            <person name="Chavez C."/>
            <person name="Frise E."/>
            <person name="George R.A."/>
            <person name="Pacleb J.M."/>
            <person name="Park S."/>
            <person name="Wan K.H."/>
            <person name="Yu C."/>
            <person name="Rubin G.M."/>
            <person name="Celniker S.E."/>
        </authorList>
    </citation>
    <scope>NUCLEOTIDE SEQUENCE [LARGE SCALE MRNA]</scope>
    <source>
        <strain>Berkeley</strain>
        <tissue>Testis</tissue>
    </source>
</reference>
<reference key="4">
    <citation type="journal article" date="2021" name="Biol. Open">
        <title>The Drosophila orthologue of the primary ciliary dyskinesia-associated gene, DNAAF3, is required for axonemal dynein assembly.</title>
        <authorList>
            <person name="Zur Lage P."/>
            <person name="Xi Z."/>
            <person name="Lennon J."/>
            <person name="Hunter I."/>
            <person name="Chan W.K."/>
            <person name="Bolado Carrancio A."/>
            <person name="von Kriegsheim A."/>
            <person name="Jarman A.P."/>
        </authorList>
    </citation>
    <scope>FUNCTION</scope>
    <scope>SUBCELLULAR LOCATION</scope>
    <scope>TISSUE SPECIFICITY</scope>
    <scope>DEVELOPMENTAL STAGE</scope>
    <scope>DISRUPTION PHENOTYPE</scope>
</reference>